<dbReference type="EC" id="1.-.-.-"/>
<dbReference type="EMBL" id="L42023">
    <property type="protein sequence ID" value="AAC21726.1"/>
    <property type="molecule type" value="Genomic_DNA"/>
</dbReference>
<dbReference type="PIR" id="B64045">
    <property type="entry name" value="B64045"/>
</dbReference>
<dbReference type="RefSeq" id="NP_438221.1">
    <property type="nucleotide sequence ID" value="NC_000907.1"/>
</dbReference>
<dbReference type="SMR" id="P44481"/>
<dbReference type="STRING" id="71421.HI_0048"/>
<dbReference type="EnsemblBacteria" id="AAC21726">
    <property type="protein sequence ID" value="AAC21726"/>
    <property type="gene ID" value="HI_0048"/>
</dbReference>
<dbReference type="KEGG" id="hin:HI_0048"/>
<dbReference type="PATRIC" id="fig|71421.8.peg.48"/>
<dbReference type="eggNOG" id="COG1028">
    <property type="taxonomic scope" value="Bacteria"/>
</dbReference>
<dbReference type="HOGENOM" id="CLU_010194_1_1_6"/>
<dbReference type="OrthoDB" id="9814396at2"/>
<dbReference type="PhylomeDB" id="P44481"/>
<dbReference type="BioCyc" id="HINF71421:G1GJ1-49-MONOMER"/>
<dbReference type="Proteomes" id="UP000000579">
    <property type="component" value="Chromosome"/>
</dbReference>
<dbReference type="GO" id="GO:0016616">
    <property type="term" value="F:oxidoreductase activity, acting on the CH-OH group of donors, NAD or NADP as acceptor"/>
    <property type="evidence" value="ECO:0000318"/>
    <property type="project" value="GO_Central"/>
</dbReference>
<dbReference type="CDD" id="cd08935">
    <property type="entry name" value="mannonate_red_SDR_c"/>
    <property type="match status" value="1"/>
</dbReference>
<dbReference type="FunFam" id="3.40.50.720:FF:000240">
    <property type="entry name" value="SDR family oxidoreductase"/>
    <property type="match status" value="1"/>
</dbReference>
<dbReference type="Gene3D" id="3.40.50.720">
    <property type="entry name" value="NAD(P)-binding Rossmann-like Domain"/>
    <property type="match status" value="1"/>
</dbReference>
<dbReference type="InterPro" id="IPR036291">
    <property type="entry name" value="NAD(P)-bd_dom_sf"/>
</dbReference>
<dbReference type="InterPro" id="IPR020904">
    <property type="entry name" value="Sc_DH/Rdtase_CS"/>
</dbReference>
<dbReference type="InterPro" id="IPR002347">
    <property type="entry name" value="SDR_fam"/>
</dbReference>
<dbReference type="NCBIfam" id="NF006132">
    <property type="entry name" value="PRK08277.1"/>
    <property type="match status" value="1"/>
</dbReference>
<dbReference type="PANTHER" id="PTHR42760:SF115">
    <property type="entry name" value="3-OXOACYL-[ACYL-CARRIER-PROTEIN] REDUCTASE FABG"/>
    <property type="match status" value="1"/>
</dbReference>
<dbReference type="PANTHER" id="PTHR42760">
    <property type="entry name" value="SHORT-CHAIN DEHYDROGENASES/REDUCTASES FAMILY MEMBER"/>
    <property type="match status" value="1"/>
</dbReference>
<dbReference type="Pfam" id="PF00106">
    <property type="entry name" value="adh_short"/>
    <property type="match status" value="1"/>
</dbReference>
<dbReference type="PRINTS" id="PR00081">
    <property type="entry name" value="GDHRDH"/>
</dbReference>
<dbReference type="PRINTS" id="PR00080">
    <property type="entry name" value="SDRFAMILY"/>
</dbReference>
<dbReference type="SUPFAM" id="SSF51735">
    <property type="entry name" value="NAD(P)-binding Rossmann-fold domains"/>
    <property type="match status" value="1"/>
</dbReference>
<dbReference type="PROSITE" id="PS00061">
    <property type="entry name" value="ADH_SHORT"/>
    <property type="match status" value="1"/>
</dbReference>
<accession>P44481</accession>
<keyword id="KW-0520">NAD</keyword>
<keyword id="KW-0560">Oxidoreductase</keyword>
<keyword id="KW-1185">Reference proteome</keyword>
<gene>
    <name type="ordered locus">HI_0048</name>
</gene>
<reference key="1">
    <citation type="journal article" date="1995" name="Science">
        <title>Whole-genome random sequencing and assembly of Haemophilus influenzae Rd.</title>
        <authorList>
            <person name="Fleischmann R.D."/>
            <person name="Adams M.D."/>
            <person name="White O."/>
            <person name="Clayton R.A."/>
            <person name="Kirkness E.F."/>
            <person name="Kerlavage A.R."/>
            <person name="Bult C.J."/>
            <person name="Tomb J.-F."/>
            <person name="Dougherty B.A."/>
            <person name="Merrick J.M."/>
            <person name="McKenney K."/>
            <person name="Sutton G.G."/>
            <person name="FitzHugh W."/>
            <person name="Fields C.A."/>
            <person name="Gocayne J.D."/>
            <person name="Scott J.D."/>
            <person name="Shirley R."/>
            <person name="Liu L.-I."/>
            <person name="Glodek A."/>
            <person name="Kelley J.M."/>
            <person name="Weidman J.F."/>
            <person name="Phillips C.A."/>
            <person name="Spriggs T."/>
            <person name="Hedblom E."/>
            <person name="Cotton M.D."/>
            <person name="Utterback T.R."/>
            <person name="Hanna M.C."/>
            <person name="Nguyen D.T."/>
            <person name="Saudek D.M."/>
            <person name="Brandon R.C."/>
            <person name="Fine L.D."/>
            <person name="Fritchman J.L."/>
            <person name="Fuhrmann J.L."/>
            <person name="Geoghagen N.S.M."/>
            <person name="Gnehm C.L."/>
            <person name="McDonald L.A."/>
            <person name="Small K.V."/>
            <person name="Fraser C.M."/>
            <person name="Smith H.O."/>
            <person name="Venter J.C."/>
        </authorList>
    </citation>
    <scope>NUCLEOTIDE SEQUENCE [LARGE SCALE GENOMIC DNA]</scope>
    <source>
        <strain>ATCC 51907 / DSM 11121 / KW20 / Rd</strain>
    </source>
</reference>
<reference key="2">
    <citation type="journal article" date="2000" name="Electrophoresis">
        <title>Two-dimensional map of the proteome of Haemophilus influenzae.</title>
        <authorList>
            <person name="Langen H."/>
            <person name="Takacs B."/>
            <person name="Evers S."/>
            <person name="Berndt P."/>
            <person name="Lahm H.W."/>
            <person name="Wipf B."/>
            <person name="Gray C."/>
            <person name="Fountoulakis M."/>
        </authorList>
    </citation>
    <scope>IDENTIFICATION BY MASS SPECTROMETRY</scope>
    <source>
        <strain>ATCC 51907 / DSM 11121 / KW20 / Rd</strain>
    </source>
</reference>
<organism>
    <name type="scientific">Haemophilus influenzae (strain ATCC 51907 / DSM 11121 / KW20 / Rd)</name>
    <dbReference type="NCBI Taxonomy" id="71421"/>
    <lineage>
        <taxon>Bacteria</taxon>
        <taxon>Pseudomonadati</taxon>
        <taxon>Pseudomonadota</taxon>
        <taxon>Gammaproteobacteria</taxon>
        <taxon>Pasteurellales</taxon>
        <taxon>Pasteurellaceae</taxon>
        <taxon>Haemophilus</taxon>
    </lineage>
</organism>
<evidence type="ECO:0000250" key="1"/>
<evidence type="ECO:0000255" key="2">
    <source>
        <dbReference type="PROSITE-ProRule" id="PRU10001"/>
    </source>
</evidence>
<evidence type="ECO:0000305" key="3"/>
<comment type="similarity">
    <text evidence="3">Belongs to the short-chain dehydrogenases/reductases (SDR) family.</text>
</comment>
<name>Y048_HAEIN</name>
<sequence>MEFTMNIAANHNLENKLIIITGAGGVLCSFLAKQLAYTKANIALLDLNFEAADKVAKEINQSGGKAKAYKTNVLELENIKEVRNQIETDFGTCDILINGAGGNNPKATTDNEFHQFDLNETTRTFFDLDKSGIEFVFNLNYLGSLLPTQVFAKDMLGKQGANIINISSMNAFTPLTKIPAYSGAKAAISNFTQWLAVYFSKVGIRCNAIAPGFLVSNQNLALLFDTEGKPTDRANKILTNTPMGRFGESEELLGALLFLIDENYSAFVNGVVLPVDGGFSAYSGV</sequence>
<protein>
    <recommendedName>
        <fullName>Uncharacterized oxidoreductase HI_0048</fullName>
        <ecNumber>1.-.-.-</ecNumber>
    </recommendedName>
</protein>
<feature type="chain" id="PRO_0000054841" description="Uncharacterized oxidoreductase HI_0048">
    <location>
        <begin position="1"/>
        <end position="285"/>
    </location>
</feature>
<feature type="active site" description="Proton acceptor" evidence="2">
    <location>
        <position position="181"/>
    </location>
</feature>
<feature type="binding site" evidence="1">
    <location>
        <position position="168"/>
    </location>
    <ligand>
        <name>substrate</name>
    </ligand>
</feature>
<proteinExistence type="evidence at protein level"/>